<organism>
    <name type="scientific">Legionella pneumophila (strain Corby)</name>
    <dbReference type="NCBI Taxonomy" id="400673"/>
    <lineage>
        <taxon>Bacteria</taxon>
        <taxon>Pseudomonadati</taxon>
        <taxon>Pseudomonadota</taxon>
        <taxon>Gammaproteobacteria</taxon>
        <taxon>Legionellales</taxon>
        <taxon>Legionellaceae</taxon>
        <taxon>Legionella</taxon>
    </lineage>
</organism>
<gene>
    <name evidence="1" type="primary">prfC</name>
    <name type="ordered locus">LPC_2420</name>
</gene>
<accession>A5IG41</accession>
<feature type="chain" id="PRO_1000023659" description="Peptide chain release factor 3">
    <location>
        <begin position="1"/>
        <end position="526"/>
    </location>
</feature>
<feature type="domain" description="tr-type G">
    <location>
        <begin position="9"/>
        <end position="277"/>
    </location>
</feature>
<feature type="binding site" evidence="1">
    <location>
        <begin position="18"/>
        <end position="25"/>
    </location>
    <ligand>
        <name>GTP</name>
        <dbReference type="ChEBI" id="CHEBI:37565"/>
    </ligand>
</feature>
<feature type="binding site" evidence="1">
    <location>
        <begin position="86"/>
        <end position="90"/>
    </location>
    <ligand>
        <name>GTP</name>
        <dbReference type="ChEBI" id="CHEBI:37565"/>
    </ligand>
</feature>
<feature type="binding site" evidence="1">
    <location>
        <begin position="140"/>
        <end position="143"/>
    </location>
    <ligand>
        <name>GTP</name>
        <dbReference type="ChEBI" id="CHEBI:37565"/>
    </ligand>
</feature>
<evidence type="ECO:0000255" key="1">
    <source>
        <dbReference type="HAMAP-Rule" id="MF_00072"/>
    </source>
</evidence>
<protein>
    <recommendedName>
        <fullName evidence="1">Peptide chain release factor 3</fullName>
        <shortName evidence="1">RF-3</shortName>
    </recommendedName>
</protein>
<reference key="1">
    <citation type="submission" date="2006-11" db="EMBL/GenBank/DDBJ databases">
        <title>Identification and characterization of a new conjugation/ type IVA secretion system (trb/tra) of L. pneumophila Corby localized on a mobile genomic island.</title>
        <authorList>
            <person name="Gloeckner G."/>
            <person name="Albert-Weissenberger C."/>
            <person name="Weinmann E."/>
            <person name="Jacobi S."/>
            <person name="Schunder E."/>
            <person name="Steinert M."/>
            <person name="Buchrieser C."/>
            <person name="Hacker J."/>
            <person name="Heuner K."/>
        </authorList>
    </citation>
    <scope>NUCLEOTIDE SEQUENCE [LARGE SCALE GENOMIC DNA]</scope>
    <source>
        <strain>Corby</strain>
    </source>
</reference>
<dbReference type="EMBL" id="CP000675">
    <property type="protein sequence ID" value="ABQ56341.1"/>
    <property type="molecule type" value="Genomic_DNA"/>
</dbReference>
<dbReference type="RefSeq" id="WP_011945980.1">
    <property type="nucleotide sequence ID" value="NZ_JAPMSS010000002.1"/>
</dbReference>
<dbReference type="SMR" id="A5IG41"/>
<dbReference type="KEGG" id="lpc:LPC_2420"/>
<dbReference type="HOGENOM" id="CLU_002794_2_1_6"/>
<dbReference type="GO" id="GO:0005829">
    <property type="term" value="C:cytosol"/>
    <property type="evidence" value="ECO:0007669"/>
    <property type="project" value="TreeGrafter"/>
</dbReference>
<dbReference type="GO" id="GO:0005525">
    <property type="term" value="F:GTP binding"/>
    <property type="evidence" value="ECO:0007669"/>
    <property type="project" value="UniProtKB-UniRule"/>
</dbReference>
<dbReference type="GO" id="GO:0003924">
    <property type="term" value="F:GTPase activity"/>
    <property type="evidence" value="ECO:0007669"/>
    <property type="project" value="InterPro"/>
</dbReference>
<dbReference type="GO" id="GO:0097216">
    <property type="term" value="F:guanosine tetraphosphate binding"/>
    <property type="evidence" value="ECO:0007669"/>
    <property type="project" value="UniProtKB-ARBA"/>
</dbReference>
<dbReference type="GO" id="GO:0016150">
    <property type="term" value="F:translation release factor activity, codon nonspecific"/>
    <property type="evidence" value="ECO:0007669"/>
    <property type="project" value="TreeGrafter"/>
</dbReference>
<dbReference type="GO" id="GO:0016149">
    <property type="term" value="F:translation release factor activity, codon specific"/>
    <property type="evidence" value="ECO:0007669"/>
    <property type="project" value="UniProtKB-UniRule"/>
</dbReference>
<dbReference type="GO" id="GO:0006449">
    <property type="term" value="P:regulation of translational termination"/>
    <property type="evidence" value="ECO:0007669"/>
    <property type="project" value="UniProtKB-UniRule"/>
</dbReference>
<dbReference type="CDD" id="cd04169">
    <property type="entry name" value="RF3"/>
    <property type="match status" value="1"/>
</dbReference>
<dbReference type="CDD" id="cd03689">
    <property type="entry name" value="RF3_II"/>
    <property type="match status" value="1"/>
</dbReference>
<dbReference type="CDD" id="cd16259">
    <property type="entry name" value="RF3_III"/>
    <property type="match status" value="1"/>
</dbReference>
<dbReference type="FunFam" id="2.40.30.10:FF:000040">
    <property type="entry name" value="Peptide chain release factor 3"/>
    <property type="match status" value="1"/>
</dbReference>
<dbReference type="FunFam" id="3.30.70.3280:FF:000001">
    <property type="entry name" value="Peptide chain release factor 3"/>
    <property type="match status" value="1"/>
</dbReference>
<dbReference type="FunFam" id="3.40.50.300:FF:000542">
    <property type="entry name" value="Peptide chain release factor 3"/>
    <property type="match status" value="1"/>
</dbReference>
<dbReference type="Gene3D" id="3.40.50.300">
    <property type="entry name" value="P-loop containing nucleotide triphosphate hydrolases"/>
    <property type="match status" value="2"/>
</dbReference>
<dbReference type="Gene3D" id="3.30.70.3280">
    <property type="entry name" value="Peptide chain release factor 3, domain III"/>
    <property type="match status" value="1"/>
</dbReference>
<dbReference type="HAMAP" id="MF_00072">
    <property type="entry name" value="Rel_fac_3"/>
    <property type="match status" value="1"/>
</dbReference>
<dbReference type="InterPro" id="IPR053905">
    <property type="entry name" value="EF-G-like_DII"/>
</dbReference>
<dbReference type="InterPro" id="IPR035647">
    <property type="entry name" value="EFG_III/V"/>
</dbReference>
<dbReference type="InterPro" id="IPR031157">
    <property type="entry name" value="G_TR_CS"/>
</dbReference>
<dbReference type="InterPro" id="IPR027417">
    <property type="entry name" value="P-loop_NTPase"/>
</dbReference>
<dbReference type="InterPro" id="IPR004548">
    <property type="entry name" value="PrfC"/>
</dbReference>
<dbReference type="InterPro" id="IPR032090">
    <property type="entry name" value="RF3_C"/>
</dbReference>
<dbReference type="InterPro" id="IPR038467">
    <property type="entry name" value="RF3_dom_3_sf"/>
</dbReference>
<dbReference type="InterPro" id="IPR041732">
    <property type="entry name" value="RF3_GTP-bd"/>
</dbReference>
<dbReference type="InterPro" id="IPR005225">
    <property type="entry name" value="Small_GTP-bd"/>
</dbReference>
<dbReference type="InterPro" id="IPR000795">
    <property type="entry name" value="T_Tr_GTP-bd_dom"/>
</dbReference>
<dbReference type="InterPro" id="IPR009000">
    <property type="entry name" value="Transl_B-barrel_sf"/>
</dbReference>
<dbReference type="NCBIfam" id="TIGR00503">
    <property type="entry name" value="prfC"/>
    <property type="match status" value="1"/>
</dbReference>
<dbReference type="NCBIfam" id="NF001964">
    <property type="entry name" value="PRK00741.1"/>
    <property type="match status" value="1"/>
</dbReference>
<dbReference type="NCBIfam" id="TIGR00231">
    <property type="entry name" value="small_GTP"/>
    <property type="match status" value="1"/>
</dbReference>
<dbReference type="PANTHER" id="PTHR43556">
    <property type="entry name" value="PEPTIDE CHAIN RELEASE FACTOR RF3"/>
    <property type="match status" value="1"/>
</dbReference>
<dbReference type="PANTHER" id="PTHR43556:SF2">
    <property type="entry name" value="PEPTIDE CHAIN RELEASE FACTOR RF3"/>
    <property type="match status" value="1"/>
</dbReference>
<dbReference type="Pfam" id="PF22042">
    <property type="entry name" value="EF-G_D2"/>
    <property type="match status" value="1"/>
</dbReference>
<dbReference type="Pfam" id="PF00009">
    <property type="entry name" value="GTP_EFTU"/>
    <property type="match status" value="1"/>
</dbReference>
<dbReference type="Pfam" id="PF16658">
    <property type="entry name" value="RF3_C"/>
    <property type="match status" value="1"/>
</dbReference>
<dbReference type="PRINTS" id="PR00315">
    <property type="entry name" value="ELONGATNFCT"/>
</dbReference>
<dbReference type="SUPFAM" id="SSF54980">
    <property type="entry name" value="EF-G C-terminal domain-like"/>
    <property type="match status" value="1"/>
</dbReference>
<dbReference type="SUPFAM" id="SSF52540">
    <property type="entry name" value="P-loop containing nucleoside triphosphate hydrolases"/>
    <property type="match status" value="1"/>
</dbReference>
<dbReference type="SUPFAM" id="SSF50447">
    <property type="entry name" value="Translation proteins"/>
    <property type="match status" value="1"/>
</dbReference>
<dbReference type="PROSITE" id="PS00301">
    <property type="entry name" value="G_TR_1"/>
    <property type="match status" value="1"/>
</dbReference>
<dbReference type="PROSITE" id="PS51722">
    <property type="entry name" value="G_TR_2"/>
    <property type="match status" value="1"/>
</dbReference>
<keyword id="KW-0963">Cytoplasm</keyword>
<keyword id="KW-0342">GTP-binding</keyword>
<keyword id="KW-0547">Nucleotide-binding</keyword>
<keyword id="KW-0648">Protein biosynthesis</keyword>
<sequence>MSDFYQDFNKRRTFAIISHPDAGKTTVTEKLLLFGGAIQLAGTVKGRKADRHATSDWMEMEKERGISITTSVMQFIHNQHVINLLDTPGHEDFSEDTYRTLTAVDSALMVIDVAKGVEERTVKLMEVCRLRDTPIMTFINKLDREGREPIDLLDEVESVLGIQCAPITWPVGMGKRFKGIYHRYQDIIYLYQQGSNAKKVEAMQIKGLDNPQLDELIGDSADELREEIELVKGASHGFNLEDYLAGKMTPVYFGSAINNFGIKELLDDFVEYAPGPQPRATQERVVSPNEETFSGFVFKIQANMDPKHRDRIAFLRVCSGAYKKGMKLSHLRIGKEVQISNALTFMAGDRSHTELALAGDIIGLHNHGTIRIGDTFTQGEQLKFTGIPNFAPELFRLVRLRDPLKSKALLKGLIELSEEGATQVFRPLNSNQLILGAVGILQFDVVAHRLKHEYKVDCIYESVNVTCARWVYSEDDKAMSEFRTKAYDYLALDGGDMLMYLAPTKVNLTMAEERYPKIKFCATREH</sequence>
<name>RF3_LEGPC</name>
<comment type="function">
    <text evidence="1">Increases the formation of ribosomal termination complexes and stimulates activities of RF-1 and RF-2. It binds guanine nucleotides and has strong preference for UGA stop codons. It may interact directly with the ribosome. The stimulation of RF-1 and RF-2 is significantly reduced by GTP and GDP, but not by GMP.</text>
</comment>
<comment type="subcellular location">
    <subcellularLocation>
        <location evidence="1">Cytoplasm</location>
    </subcellularLocation>
</comment>
<comment type="similarity">
    <text evidence="1">Belongs to the TRAFAC class translation factor GTPase superfamily. Classic translation factor GTPase family. PrfC subfamily.</text>
</comment>
<proteinExistence type="inferred from homology"/>